<sequence length="367" mass="40812">MSYYNIFLDFLSYIGSGAALFIKIIAVIISVMISVAYLVYMERKVIAAIQLRQGPNVVGPFGLLQPFADAVKLIIKEHIIPFKSNKICFLIAPIITFTLALLGWAVIPFGADVIVNDGYEVIIPNAIANINIGVLYILAISSLGVYGIIIAGWSSNSNYAFLGAIRSASQMISYEVSIGLTIVTVLLATGSLKLGEIVVARHNMPYWIDLLLLPMACIFFISALAETNRHPFDLPEAESELVSGYNVEYSSMPFALFFLGEYANMILINAMAVIFFFGGWYPPLNIGFLYIIPGIVWFVLKVVALLFCFIWIRATIPRYRYDQLMGLGWKVFLPISLLWVVLVSSILVYTDSLPSNNKQYVSHAMHK</sequence>
<feature type="chain" id="PRO_0000244914" description="NADH-quinone oxidoreductase subunit H">
    <location>
        <begin position="1"/>
        <end position="367"/>
    </location>
</feature>
<feature type="transmembrane region" description="Helical" evidence="1">
    <location>
        <begin position="19"/>
        <end position="39"/>
    </location>
</feature>
<feature type="transmembrane region" description="Helical" evidence="1">
    <location>
        <begin position="87"/>
        <end position="107"/>
    </location>
</feature>
<feature type="transmembrane region" description="Helical" evidence="1">
    <location>
        <begin position="132"/>
        <end position="152"/>
    </location>
</feature>
<feature type="transmembrane region" description="Helical" evidence="1">
    <location>
        <begin position="178"/>
        <end position="198"/>
    </location>
</feature>
<feature type="transmembrane region" description="Helical" evidence="1">
    <location>
        <begin position="204"/>
        <end position="224"/>
    </location>
</feature>
<feature type="transmembrane region" description="Helical" evidence="1">
    <location>
        <begin position="266"/>
        <end position="286"/>
    </location>
</feature>
<feature type="transmembrane region" description="Helical" evidence="1">
    <location>
        <begin position="291"/>
        <end position="311"/>
    </location>
</feature>
<feature type="transmembrane region" description="Helical" evidence="1">
    <location>
        <begin position="328"/>
        <end position="348"/>
    </location>
</feature>
<reference key="1">
    <citation type="journal article" date="2006" name="PLoS Genet.">
        <title>Comparative genomics of emerging human ehrlichiosis agents.</title>
        <authorList>
            <person name="Dunning Hotopp J.C."/>
            <person name="Lin M."/>
            <person name="Madupu R."/>
            <person name="Crabtree J."/>
            <person name="Angiuoli S.V."/>
            <person name="Eisen J.A."/>
            <person name="Seshadri R."/>
            <person name="Ren Q."/>
            <person name="Wu M."/>
            <person name="Utterback T.R."/>
            <person name="Smith S."/>
            <person name="Lewis M."/>
            <person name="Khouri H."/>
            <person name="Zhang C."/>
            <person name="Niu H."/>
            <person name="Lin Q."/>
            <person name="Ohashi N."/>
            <person name="Zhi N."/>
            <person name="Nelson W.C."/>
            <person name="Brinkac L.M."/>
            <person name="Dodson R.J."/>
            <person name="Rosovitz M.J."/>
            <person name="Sundaram J.P."/>
            <person name="Daugherty S.C."/>
            <person name="Davidsen T."/>
            <person name="Durkin A.S."/>
            <person name="Gwinn M.L."/>
            <person name="Haft D.H."/>
            <person name="Selengut J.D."/>
            <person name="Sullivan S.A."/>
            <person name="Zafar N."/>
            <person name="Zhou L."/>
            <person name="Benahmed F."/>
            <person name="Forberger H."/>
            <person name="Halpin R."/>
            <person name="Mulligan S."/>
            <person name="Robinson J."/>
            <person name="White O."/>
            <person name="Rikihisa Y."/>
            <person name="Tettelin H."/>
        </authorList>
    </citation>
    <scope>NUCLEOTIDE SEQUENCE [LARGE SCALE GENOMIC DNA]</scope>
    <source>
        <strain>ATCC CRL-10679 / Arkansas</strain>
    </source>
</reference>
<gene>
    <name evidence="1" type="primary">nuoH</name>
    <name type="ordered locus">ECH_0617</name>
</gene>
<dbReference type="EC" id="7.1.1.-" evidence="1"/>
<dbReference type="EMBL" id="CP000236">
    <property type="protein sequence ID" value="ABD45400.1"/>
    <property type="molecule type" value="Genomic_DNA"/>
</dbReference>
<dbReference type="RefSeq" id="WP_006011902.1">
    <property type="nucleotide sequence ID" value="NC_007799.1"/>
</dbReference>
<dbReference type="SMR" id="Q2GGK6"/>
<dbReference type="STRING" id="205920.ECH_0617"/>
<dbReference type="KEGG" id="ech:ECH_0617"/>
<dbReference type="eggNOG" id="COG1005">
    <property type="taxonomic scope" value="Bacteria"/>
</dbReference>
<dbReference type="HOGENOM" id="CLU_015134_0_1_5"/>
<dbReference type="OrthoDB" id="9803734at2"/>
<dbReference type="Proteomes" id="UP000008320">
    <property type="component" value="Chromosome"/>
</dbReference>
<dbReference type="GO" id="GO:0005886">
    <property type="term" value="C:plasma membrane"/>
    <property type="evidence" value="ECO:0007669"/>
    <property type="project" value="UniProtKB-SubCell"/>
</dbReference>
<dbReference type="GO" id="GO:0003954">
    <property type="term" value="F:NADH dehydrogenase activity"/>
    <property type="evidence" value="ECO:0007669"/>
    <property type="project" value="TreeGrafter"/>
</dbReference>
<dbReference type="GO" id="GO:0016655">
    <property type="term" value="F:oxidoreductase activity, acting on NAD(P)H, quinone or similar compound as acceptor"/>
    <property type="evidence" value="ECO:0007669"/>
    <property type="project" value="UniProtKB-UniRule"/>
</dbReference>
<dbReference type="GO" id="GO:0048038">
    <property type="term" value="F:quinone binding"/>
    <property type="evidence" value="ECO:0007669"/>
    <property type="project" value="UniProtKB-KW"/>
</dbReference>
<dbReference type="GO" id="GO:0009060">
    <property type="term" value="P:aerobic respiration"/>
    <property type="evidence" value="ECO:0007669"/>
    <property type="project" value="TreeGrafter"/>
</dbReference>
<dbReference type="HAMAP" id="MF_01350">
    <property type="entry name" value="NDH1_NuoH"/>
    <property type="match status" value="1"/>
</dbReference>
<dbReference type="InterPro" id="IPR001694">
    <property type="entry name" value="NADH_UbQ_OxRdtase_su1/FPO"/>
</dbReference>
<dbReference type="InterPro" id="IPR018086">
    <property type="entry name" value="NADH_UbQ_OxRdtase_su1_CS"/>
</dbReference>
<dbReference type="NCBIfam" id="NF004741">
    <property type="entry name" value="PRK06076.1-2"/>
    <property type="match status" value="1"/>
</dbReference>
<dbReference type="NCBIfam" id="NF004745">
    <property type="entry name" value="PRK06076.1-6"/>
    <property type="match status" value="1"/>
</dbReference>
<dbReference type="PANTHER" id="PTHR11432">
    <property type="entry name" value="NADH DEHYDROGENASE SUBUNIT 1"/>
    <property type="match status" value="1"/>
</dbReference>
<dbReference type="PANTHER" id="PTHR11432:SF3">
    <property type="entry name" value="NADH-UBIQUINONE OXIDOREDUCTASE CHAIN 1"/>
    <property type="match status" value="1"/>
</dbReference>
<dbReference type="Pfam" id="PF00146">
    <property type="entry name" value="NADHdh"/>
    <property type="match status" value="1"/>
</dbReference>
<dbReference type="PROSITE" id="PS00667">
    <property type="entry name" value="COMPLEX1_ND1_1"/>
    <property type="match status" value="1"/>
</dbReference>
<dbReference type="PROSITE" id="PS00668">
    <property type="entry name" value="COMPLEX1_ND1_2"/>
    <property type="match status" value="1"/>
</dbReference>
<protein>
    <recommendedName>
        <fullName evidence="1">NADH-quinone oxidoreductase subunit H</fullName>
        <ecNumber evidence="1">7.1.1.-</ecNumber>
    </recommendedName>
    <alternativeName>
        <fullName evidence="1">NADH dehydrogenase I subunit H</fullName>
    </alternativeName>
    <alternativeName>
        <fullName evidence="1">NDH-1 subunit H</fullName>
    </alternativeName>
</protein>
<evidence type="ECO:0000255" key="1">
    <source>
        <dbReference type="HAMAP-Rule" id="MF_01350"/>
    </source>
</evidence>
<accession>Q2GGK6</accession>
<keyword id="KW-0997">Cell inner membrane</keyword>
<keyword id="KW-1003">Cell membrane</keyword>
<keyword id="KW-0472">Membrane</keyword>
<keyword id="KW-0520">NAD</keyword>
<keyword id="KW-0874">Quinone</keyword>
<keyword id="KW-1185">Reference proteome</keyword>
<keyword id="KW-1278">Translocase</keyword>
<keyword id="KW-0812">Transmembrane</keyword>
<keyword id="KW-1133">Transmembrane helix</keyword>
<keyword id="KW-0830">Ubiquinone</keyword>
<organism>
    <name type="scientific">Ehrlichia chaffeensis (strain ATCC CRL-10679 / Arkansas)</name>
    <dbReference type="NCBI Taxonomy" id="205920"/>
    <lineage>
        <taxon>Bacteria</taxon>
        <taxon>Pseudomonadati</taxon>
        <taxon>Pseudomonadota</taxon>
        <taxon>Alphaproteobacteria</taxon>
        <taxon>Rickettsiales</taxon>
        <taxon>Anaplasmataceae</taxon>
        <taxon>Ehrlichia</taxon>
    </lineage>
</organism>
<proteinExistence type="inferred from homology"/>
<name>NUOH_EHRCR</name>
<comment type="function">
    <text evidence="1">NDH-1 shuttles electrons from NADH, via FMN and iron-sulfur (Fe-S) centers, to quinones in the respiratory chain. The immediate electron acceptor for the enzyme in this species is believed to be ubiquinone. Couples the redox reaction to proton translocation (for every two electrons transferred, four hydrogen ions are translocated across the cytoplasmic membrane), and thus conserves the redox energy in a proton gradient. This subunit may bind ubiquinone.</text>
</comment>
<comment type="catalytic activity">
    <reaction evidence="1">
        <text>a quinone + NADH + 5 H(+)(in) = a quinol + NAD(+) + 4 H(+)(out)</text>
        <dbReference type="Rhea" id="RHEA:57888"/>
        <dbReference type="ChEBI" id="CHEBI:15378"/>
        <dbReference type="ChEBI" id="CHEBI:24646"/>
        <dbReference type="ChEBI" id="CHEBI:57540"/>
        <dbReference type="ChEBI" id="CHEBI:57945"/>
        <dbReference type="ChEBI" id="CHEBI:132124"/>
    </reaction>
</comment>
<comment type="subunit">
    <text evidence="1">NDH-1 is composed of 14 different subunits. Subunits NuoA, H, J, K, L, M, N constitute the membrane sector of the complex.</text>
</comment>
<comment type="subcellular location">
    <subcellularLocation>
        <location evidence="1">Cell inner membrane</location>
        <topology evidence="1">Multi-pass membrane protein</topology>
    </subcellularLocation>
</comment>
<comment type="similarity">
    <text evidence="1">Belongs to the complex I subunit 1 family.</text>
</comment>